<comment type="function">
    <text evidence="1">One of the primary rRNA binding proteins, it binds directly near the 3'-end of the 23S rRNA, where it nucleates assembly of the 50S subunit.</text>
</comment>
<comment type="subunit">
    <text evidence="1">Part of the 50S ribosomal subunit. Forms a cluster with proteins L14 and L19.</text>
</comment>
<comment type="similarity">
    <text evidence="1">Belongs to the universal ribosomal protein uL3 family.</text>
</comment>
<proteinExistence type="inferred from homology"/>
<accession>C1CP88</accession>
<gene>
    <name evidence="1" type="primary">rplC</name>
    <name type="ordered locus">SPT_0256</name>
</gene>
<protein>
    <recommendedName>
        <fullName evidence="1">Large ribosomal subunit protein uL3</fullName>
    </recommendedName>
    <alternativeName>
        <fullName evidence="3">50S ribosomal protein L3</fullName>
    </alternativeName>
</protein>
<keyword id="KW-0687">Ribonucleoprotein</keyword>
<keyword id="KW-0689">Ribosomal protein</keyword>
<keyword id="KW-0694">RNA-binding</keyword>
<keyword id="KW-0699">rRNA-binding</keyword>
<evidence type="ECO:0000255" key="1">
    <source>
        <dbReference type="HAMAP-Rule" id="MF_01325"/>
    </source>
</evidence>
<evidence type="ECO:0000256" key="2">
    <source>
        <dbReference type="SAM" id="MobiDB-lite"/>
    </source>
</evidence>
<evidence type="ECO:0000305" key="3"/>
<organism>
    <name type="scientific">Streptococcus pneumoniae (strain Taiwan19F-14)</name>
    <dbReference type="NCBI Taxonomy" id="487213"/>
    <lineage>
        <taxon>Bacteria</taxon>
        <taxon>Bacillati</taxon>
        <taxon>Bacillota</taxon>
        <taxon>Bacilli</taxon>
        <taxon>Lactobacillales</taxon>
        <taxon>Streptococcaceae</taxon>
        <taxon>Streptococcus</taxon>
    </lineage>
</organism>
<sequence>MTKGILGKKVGMTQIFTEAGELIPVTVIEATPNVVLQVKTVETDGYNAIQVGFDDKREVLSNKPAKGHVAKANTAPKRFIREFKNVEGLEVGAEITVETFAAGDVVDVTGTSKGKGFQGVIKRHGQSRGPMAHGSRYHRRPGSMGPVAPNRVFKGKNLAGRMGGDRVTIQNLEVVQVVPEKNVILIKGNVPGAKKSLITIKSAVKAGK</sequence>
<feature type="chain" id="PRO_1000165911" description="Large ribosomal subunit protein uL3">
    <location>
        <begin position="1"/>
        <end position="208"/>
    </location>
</feature>
<feature type="region of interest" description="Disordered" evidence="2">
    <location>
        <begin position="116"/>
        <end position="148"/>
    </location>
</feature>
<reference key="1">
    <citation type="journal article" date="2010" name="Genome Biol.">
        <title>Structure and dynamics of the pan-genome of Streptococcus pneumoniae and closely related species.</title>
        <authorList>
            <person name="Donati C."/>
            <person name="Hiller N.L."/>
            <person name="Tettelin H."/>
            <person name="Muzzi A."/>
            <person name="Croucher N.J."/>
            <person name="Angiuoli S.V."/>
            <person name="Oggioni M."/>
            <person name="Dunning Hotopp J.C."/>
            <person name="Hu F.Z."/>
            <person name="Riley D.R."/>
            <person name="Covacci A."/>
            <person name="Mitchell T.J."/>
            <person name="Bentley S.D."/>
            <person name="Kilian M."/>
            <person name="Ehrlich G.D."/>
            <person name="Rappuoli R."/>
            <person name="Moxon E.R."/>
            <person name="Masignani V."/>
        </authorList>
    </citation>
    <scope>NUCLEOTIDE SEQUENCE [LARGE SCALE GENOMIC DNA]</scope>
    <source>
        <strain>Taiwan19F-14</strain>
    </source>
</reference>
<name>RL3_STRZT</name>
<dbReference type="EMBL" id="CP000921">
    <property type="protein sequence ID" value="ACO22567.1"/>
    <property type="molecule type" value="Genomic_DNA"/>
</dbReference>
<dbReference type="RefSeq" id="WP_000160197.1">
    <property type="nucleotide sequence ID" value="NC_012469.1"/>
</dbReference>
<dbReference type="SMR" id="C1CP88"/>
<dbReference type="GeneID" id="93738957"/>
<dbReference type="KEGG" id="snt:SPT_0256"/>
<dbReference type="HOGENOM" id="CLU_044142_4_1_9"/>
<dbReference type="GO" id="GO:0022625">
    <property type="term" value="C:cytosolic large ribosomal subunit"/>
    <property type="evidence" value="ECO:0007669"/>
    <property type="project" value="TreeGrafter"/>
</dbReference>
<dbReference type="GO" id="GO:0019843">
    <property type="term" value="F:rRNA binding"/>
    <property type="evidence" value="ECO:0007669"/>
    <property type="project" value="UniProtKB-UniRule"/>
</dbReference>
<dbReference type="GO" id="GO:0003735">
    <property type="term" value="F:structural constituent of ribosome"/>
    <property type="evidence" value="ECO:0007669"/>
    <property type="project" value="InterPro"/>
</dbReference>
<dbReference type="GO" id="GO:0006412">
    <property type="term" value="P:translation"/>
    <property type="evidence" value="ECO:0007669"/>
    <property type="project" value="UniProtKB-UniRule"/>
</dbReference>
<dbReference type="FunFam" id="2.40.30.10:FF:000004">
    <property type="entry name" value="50S ribosomal protein L3"/>
    <property type="match status" value="1"/>
</dbReference>
<dbReference type="FunFam" id="3.30.160.810:FF:000002">
    <property type="entry name" value="50S ribosomal protein L3"/>
    <property type="match status" value="1"/>
</dbReference>
<dbReference type="Gene3D" id="3.30.160.810">
    <property type="match status" value="1"/>
</dbReference>
<dbReference type="Gene3D" id="2.40.30.10">
    <property type="entry name" value="Translation factors"/>
    <property type="match status" value="1"/>
</dbReference>
<dbReference type="HAMAP" id="MF_01325_B">
    <property type="entry name" value="Ribosomal_uL3_B"/>
    <property type="match status" value="1"/>
</dbReference>
<dbReference type="InterPro" id="IPR000597">
    <property type="entry name" value="Ribosomal_uL3"/>
</dbReference>
<dbReference type="InterPro" id="IPR019927">
    <property type="entry name" value="Ribosomal_uL3_bac/org-type"/>
</dbReference>
<dbReference type="InterPro" id="IPR019926">
    <property type="entry name" value="Ribosomal_uL3_CS"/>
</dbReference>
<dbReference type="InterPro" id="IPR009000">
    <property type="entry name" value="Transl_B-barrel_sf"/>
</dbReference>
<dbReference type="NCBIfam" id="TIGR03625">
    <property type="entry name" value="L3_bact"/>
    <property type="match status" value="1"/>
</dbReference>
<dbReference type="PANTHER" id="PTHR11229">
    <property type="entry name" value="50S RIBOSOMAL PROTEIN L3"/>
    <property type="match status" value="1"/>
</dbReference>
<dbReference type="PANTHER" id="PTHR11229:SF16">
    <property type="entry name" value="LARGE RIBOSOMAL SUBUNIT PROTEIN UL3C"/>
    <property type="match status" value="1"/>
</dbReference>
<dbReference type="Pfam" id="PF00297">
    <property type="entry name" value="Ribosomal_L3"/>
    <property type="match status" value="1"/>
</dbReference>
<dbReference type="SUPFAM" id="SSF50447">
    <property type="entry name" value="Translation proteins"/>
    <property type="match status" value="1"/>
</dbReference>
<dbReference type="PROSITE" id="PS00474">
    <property type="entry name" value="RIBOSOMAL_L3"/>
    <property type="match status" value="1"/>
</dbReference>